<reference key="1">
    <citation type="journal article" date="2011" name="J. Bacteriol.">
        <title>Comparative genomics of 28 Salmonella enterica isolates: evidence for CRISPR-mediated adaptive sublineage evolution.</title>
        <authorList>
            <person name="Fricke W.F."/>
            <person name="Mammel M.K."/>
            <person name="McDermott P.F."/>
            <person name="Tartera C."/>
            <person name="White D.G."/>
            <person name="Leclerc J.E."/>
            <person name="Ravel J."/>
            <person name="Cebula T.A."/>
        </authorList>
    </citation>
    <scope>NUCLEOTIDE SEQUENCE [LARGE SCALE GENOMIC DNA]</scope>
    <source>
        <strain>SL254</strain>
    </source>
</reference>
<feature type="chain" id="PRO_1000133812" description="Protein ApaG">
    <location>
        <begin position="1"/>
        <end position="125"/>
    </location>
</feature>
<feature type="domain" description="ApaG" evidence="1">
    <location>
        <begin position="1"/>
        <end position="125"/>
    </location>
</feature>
<evidence type="ECO:0000255" key="1">
    <source>
        <dbReference type="HAMAP-Rule" id="MF_00791"/>
    </source>
</evidence>
<name>APAG_SALNS</name>
<sequence length="125" mass="13924">MINSPRVCIQVQSVYIEAQSSPDDERYVFAYTVTIRNLGRAPVQLLGRYWLITNGHGRETEVQGEGVVGVQPRIAPGEEYQYTSGAVIETPLGTMQGHYEMIDENGDAFTIDIPVFRLAVPTLIH</sequence>
<proteinExistence type="inferred from homology"/>
<accession>B4T6L5</accession>
<gene>
    <name evidence="1" type="primary">apaG</name>
    <name type="ordered locus">SNSL254_A0094</name>
</gene>
<dbReference type="EMBL" id="CP001113">
    <property type="protein sequence ID" value="ACF61948.1"/>
    <property type="molecule type" value="Genomic_DNA"/>
</dbReference>
<dbReference type="RefSeq" id="WP_000610894.1">
    <property type="nucleotide sequence ID" value="NZ_CCMR01000003.1"/>
</dbReference>
<dbReference type="SMR" id="B4T6L5"/>
<dbReference type="GeneID" id="66754612"/>
<dbReference type="KEGG" id="see:SNSL254_A0094"/>
<dbReference type="HOGENOM" id="CLU_128074_0_0_6"/>
<dbReference type="Proteomes" id="UP000008824">
    <property type="component" value="Chromosome"/>
</dbReference>
<dbReference type="GO" id="GO:0070987">
    <property type="term" value="P:error-free translesion synthesis"/>
    <property type="evidence" value="ECO:0007669"/>
    <property type="project" value="TreeGrafter"/>
</dbReference>
<dbReference type="Gene3D" id="2.60.40.1470">
    <property type="entry name" value="ApaG domain"/>
    <property type="match status" value="1"/>
</dbReference>
<dbReference type="HAMAP" id="MF_00791">
    <property type="entry name" value="ApaG"/>
    <property type="match status" value="1"/>
</dbReference>
<dbReference type="InterPro" id="IPR007474">
    <property type="entry name" value="ApaG_domain"/>
</dbReference>
<dbReference type="InterPro" id="IPR036767">
    <property type="entry name" value="ApaG_sf"/>
</dbReference>
<dbReference type="InterPro" id="IPR023065">
    <property type="entry name" value="Uncharacterised_ApaG"/>
</dbReference>
<dbReference type="NCBIfam" id="NF003967">
    <property type="entry name" value="PRK05461.1"/>
    <property type="match status" value="1"/>
</dbReference>
<dbReference type="PANTHER" id="PTHR14289">
    <property type="entry name" value="F-BOX ONLY PROTEIN 3"/>
    <property type="match status" value="1"/>
</dbReference>
<dbReference type="PANTHER" id="PTHR14289:SF16">
    <property type="entry name" value="POLYMERASE DELTA-INTERACTING PROTEIN 2"/>
    <property type="match status" value="1"/>
</dbReference>
<dbReference type="Pfam" id="PF04379">
    <property type="entry name" value="DUF525"/>
    <property type="match status" value="1"/>
</dbReference>
<dbReference type="SUPFAM" id="SSF110069">
    <property type="entry name" value="ApaG-like"/>
    <property type="match status" value="1"/>
</dbReference>
<dbReference type="PROSITE" id="PS51087">
    <property type="entry name" value="APAG"/>
    <property type="match status" value="1"/>
</dbReference>
<protein>
    <recommendedName>
        <fullName evidence="1">Protein ApaG</fullName>
    </recommendedName>
</protein>
<organism>
    <name type="scientific">Salmonella newport (strain SL254)</name>
    <dbReference type="NCBI Taxonomy" id="423368"/>
    <lineage>
        <taxon>Bacteria</taxon>
        <taxon>Pseudomonadati</taxon>
        <taxon>Pseudomonadota</taxon>
        <taxon>Gammaproteobacteria</taxon>
        <taxon>Enterobacterales</taxon>
        <taxon>Enterobacteriaceae</taxon>
        <taxon>Salmonella</taxon>
    </lineage>
</organism>